<proteinExistence type="inferred from homology"/>
<keyword id="KW-0413">Isomerase</keyword>
<keyword id="KW-0663">Pyridoxal phosphate</keyword>
<sequence>MISSFHRPTVARVNLQAIKENVASVQKHIPLGVKTYAVVKADAYGHGAVQVSKALLPQVDGYCVSNLDEALQLRQAGIDKEILILGVLLPNELELAVANAITVTIASLDWIALARLEKKECQGLKVHVKVDSGMGRIGLRSSKEVNLLIDSLKELGADVEGIFTHFATADEADDTKFNQQLQFFKKLIAGLEDKPRLVHASNSATSIWHSDTIFNAVRLGIVSYGLNPSGSNLSLPFPLQEALSLESSLVHVKMISAGDTVGYGATYTAKKSEYVGTVPIGYADGWTRNMQGFSVLVDGQFCEIIGRVSMDQLTIRLSKAYPLGTKVTLIGSNQQKNISTTDIANYRNTINYEVLCLLSDRIPRIY</sequence>
<organism>
    <name type="scientific">Streptococcus pyogenes serotype M2 (strain MGAS10270)</name>
    <dbReference type="NCBI Taxonomy" id="370552"/>
    <lineage>
        <taxon>Bacteria</taxon>
        <taxon>Bacillati</taxon>
        <taxon>Bacillota</taxon>
        <taxon>Bacilli</taxon>
        <taxon>Lactobacillales</taxon>
        <taxon>Streptococcaceae</taxon>
        <taxon>Streptococcus</taxon>
    </lineage>
</organism>
<protein>
    <recommendedName>
        <fullName evidence="1">Alanine racemase</fullName>
        <ecNumber evidence="1">5.1.1.1</ecNumber>
    </recommendedName>
</protein>
<dbReference type="EC" id="5.1.1.1" evidence="1"/>
<dbReference type="EMBL" id="CP000260">
    <property type="protein sequence ID" value="ABF34665.1"/>
    <property type="molecule type" value="Genomic_DNA"/>
</dbReference>
<dbReference type="SMR" id="Q1JF94"/>
<dbReference type="KEGG" id="sph:MGAS10270_Spy1600"/>
<dbReference type="HOGENOM" id="CLU_028393_2_1_9"/>
<dbReference type="UniPathway" id="UPA00042">
    <property type="reaction ID" value="UER00497"/>
</dbReference>
<dbReference type="Proteomes" id="UP000002436">
    <property type="component" value="Chromosome"/>
</dbReference>
<dbReference type="GO" id="GO:0005829">
    <property type="term" value="C:cytosol"/>
    <property type="evidence" value="ECO:0007669"/>
    <property type="project" value="TreeGrafter"/>
</dbReference>
<dbReference type="GO" id="GO:0008784">
    <property type="term" value="F:alanine racemase activity"/>
    <property type="evidence" value="ECO:0007669"/>
    <property type="project" value="UniProtKB-UniRule"/>
</dbReference>
<dbReference type="GO" id="GO:0030170">
    <property type="term" value="F:pyridoxal phosphate binding"/>
    <property type="evidence" value="ECO:0007669"/>
    <property type="project" value="UniProtKB-UniRule"/>
</dbReference>
<dbReference type="GO" id="GO:0030632">
    <property type="term" value="P:D-alanine biosynthetic process"/>
    <property type="evidence" value="ECO:0007669"/>
    <property type="project" value="UniProtKB-UniRule"/>
</dbReference>
<dbReference type="GO" id="GO:0009252">
    <property type="term" value="P:peptidoglycan biosynthetic process"/>
    <property type="evidence" value="ECO:0007669"/>
    <property type="project" value="TreeGrafter"/>
</dbReference>
<dbReference type="CDD" id="cd00430">
    <property type="entry name" value="PLPDE_III_AR"/>
    <property type="match status" value="1"/>
</dbReference>
<dbReference type="FunFam" id="2.40.37.10:FF:000006">
    <property type="entry name" value="Alanine racemase"/>
    <property type="match status" value="1"/>
</dbReference>
<dbReference type="FunFam" id="3.20.20.10:FF:000002">
    <property type="entry name" value="Alanine racemase"/>
    <property type="match status" value="1"/>
</dbReference>
<dbReference type="Gene3D" id="3.20.20.10">
    <property type="entry name" value="Alanine racemase"/>
    <property type="match status" value="1"/>
</dbReference>
<dbReference type="Gene3D" id="2.40.37.10">
    <property type="entry name" value="Lyase, Ornithine Decarboxylase, Chain A, domain 1"/>
    <property type="match status" value="1"/>
</dbReference>
<dbReference type="HAMAP" id="MF_01201">
    <property type="entry name" value="Ala_racemase"/>
    <property type="match status" value="1"/>
</dbReference>
<dbReference type="InterPro" id="IPR000821">
    <property type="entry name" value="Ala_racemase"/>
</dbReference>
<dbReference type="InterPro" id="IPR009006">
    <property type="entry name" value="Ala_racemase/Decarboxylase_C"/>
</dbReference>
<dbReference type="InterPro" id="IPR011079">
    <property type="entry name" value="Ala_racemase_C"/>
</dbReference>
<dbReference type="InterPro" id="IPR001608">
    <property type="entry name" value="Ala_racemase_N"/>
</dbReference>
<dbReference type="InterPro" id="IPR020622">
    <property type="entry name" value="Ala_racemase_pyridoxalP-BS"/>
</dbReference>
<dbReference type="InterPro" id="IPR029066">
    <property type="entry name" value="PLP-binding_barrel"/>
</dbReference>
<dbReference type="NCBIfam" id="TIGR00492">
    <property type="entry name" value="alr"/>
    <property type="match status" value="1"/>
</dbReference>
<dbReference type="PANTHER" id="PTHR30511">
    <property type="entry name" value="ALANINE RACEMASE"/>
    <property type="match status" value="1"/>
</dbReference>
<dbReference type="PANTHER" id="PTHR30511:SF0">
    <property type="entry name" value="ALANINE RACEMASE, CATABOLIC-RELATED"/>
    <property type="match status" value="1"/>
</dbReference>
<dbReference type="Pfam" id="PF00842">
    <property type="entry name" value="Ala_racemase_C"/>
    <property type="match status" value="1"/>
</dbReference>
<dbReference type="Pfam" id="PF01168">
    <property type="entry name" value="Ala_racemase_N"/>
    <property type="match status" value="1"/>
</dbReference>
<dbReference type="PRINTS" id="PR00992">
    <property type="entry name" value="ALARACEMASE"/>
</dbReference>
<dbReference type="SMART" id="SM01005">
    <property type="entry name" value="Ala_racemase_C"/>
    <property type="match status" value="1"/>
</dbReference>
<dbReference type="SUPFAM" id="SSF50621">
    <property type="entry name" value="Alanine racemase C-terminal domain-like"/>
    <property type="match status" value="1"/>
</dbReference>
<dbReference type="SUPFAM" id="SSF51419">
    <property type="entry name" value="PLP-binding barrel"/>
    <property type="match status" value="1"/>
</dbReference>
<dbReference type="PROSITE" id="PS00395">
    <property type="entry name" value="ALANINE_RACEMASE"/>
    <property type="match status" value="1"/>
</dbReference>
<gene>
    <name type="primary">alr</name>
    <name type="ordered locus">MGAS10270_Spy1600</name>
</gene>
<feature type="chain" id="PRO_1000066048" description="Alanine racemase">
    <location>
        <begin position="1"/>
        <end position="366"/>
    </location>
</feature>
<feature type="active site" description="Proton acceptor; specific for D-alanine" evidence="1">
    <location>
        <position position="40"/>
    </location>
</feature>
<feature type="active site" description="Proton acceptor; specific for L-alanine" evidence="1">
    <location>
        <position position="263"/>
    </location>
</feature>
<feature type="binding site" evidence="1">
    <location>
        <position position="136"/>
    </location>
    <ligand>
        <name>substrate</name>
    </ligand>
</feature>
<feature type="binding site" evidence="1">
    <location>
        <position position="310"/>
    </location>
    <ligand>
        <name>substrate</name>
    </ligand>
</feature>
<feature type="modified residue" description="N6-(pyridoxal phosphate)lysine" evidence="1">
    <location>
        <position position="40"/>
    </location>
</feature>
<evidence type="ECO:0000255" key="1">
    <source>
        <dbReference type="HAMAP-Rule" id="MF_01201"/>
    </source>
</evidence>
<name>ALR_STRPD</name>
<comment type="function">
    <text evidence="1">Catalyzes the interconversion of L-alanine and D-alanine. May also act on other amino acids.</text>
</comment>
<comment type="catalytic activity">
    <reaction evidence="1">
        <text>L-alanine = D-alanine</text>
        <dbReference type="Rhea" id="RHEA:20249"/>
        <dbReference type="ChEBI" id="CHEBI:57416"/>
        <dbReference type="ChEBI" id="CHEBI:57972"/>
        <dbReference type="EC" id="5.1.1.1"/>
    </reaction>
</comment>
<comment type="cofactor">
    <cofactor evidence="1">
        <name>pyridoxal 5'-phosphate</name>
        <dbReference type="ChEBI" id="CHEBI:597326"/>
    </cofactor>
</comment>
<comment type="pathway">
    <text evidence="1">Amino-acid biosynthesis; D-alanine biosynthesis; D-alanine from L-alanine: step 1/1.</text>
</comment>
<comment type="similarity">
    <text evidence="1">Belongs to the alanine racemase family.</text>
</comment>
<accession>Q1JF94</accession>
<reference key="1">
    <citation type="journal article" date="2006" name="Proc. Natl. Acad. Sci. U.S.A.">
        <title>Molecular genetic anatomy of inter- and intraserotype variation in the human bacterial pathogen group A Streptococcus.</title>
        <authorList>
            <person name="Beres S.B."/>
            <person name="Richter E.W."/>
            <person name="Nagiec M.J."/>
            <person name="Sumby P."/>
            <person name="Porcella S.F."/>
            <person name="DeLeo F.R."/>
            <person name="Musser J.M."/>
        </authorList>
    </citation>
    <scope>NUCLEOTIDE SEQUENCE [LARGE SCALE GENOMIC DNA]</scope>
    <source>
        <strain>MGAS10270</strain>
    </source>
</reference>